<reference key="1">
    <citation type="journal article" date="1995" name="Plant Mol. Biol.">
        <title>Electron transport controls transcription of the glutamine synthetase gene (glnA) from the cyanobacterium Synechocystis sp. PCC 6803.</title>
        <authorList>
            <person name="Reyes J.C."/>
            <person name="Florencio F.J."/>
        </authorList>
    </citation>
    <scope>NUCLEOTIDE SEQUENCE [GENOMIC DNA]</scope>
    <source>
        <strain>ATCC 27184 / PCC 6803 / Kazusa</strain>
    </source>
</reference>
<reference key="2">
    <citation type="journal article" date="1996" name="DNA Res.">
        <title>Sequence analysis of the genome of the unicellular cyanobacterium Synechocystis sp. strain PCC6803. II. Sequence determination of the entire genome and assignment of potential protein-coding regions.</title>
        <authorList>
            <person name="Kaneko T."/>
            <person name="Sato S."/>
            <person name="Kotani H."/>
            <person name="Tanaka A."/>
            <person name="Asamizu E."/>
            <person name="Nakamura Y."/>
            <person name="Miyajima N."/>
            <person name="Hirosawa M."/>
            <person name="Sugiura M."/>
            <person name="Sasamoto S."/>
            <person name="Kimura T."/>
            <person name="Hosouchi T."/>
            <person name="Matsuno A."/>
            <person name="Muraki A."/>
            <person name="Nakazaki N."/>
            <person name="Naruo K."/>
            <person name="Okumura S."/>
            <person name="Shimpo S."/>
            <person name="Takeuchi C."/>
            <person name="Wada T."/>
            <person name="Watanabe A."/>
            <person name="Yamada M."/>
            <person name="Yasuda M."/>
            <person name="Tabata S."/>
        </authorList>
    </citation>
    <scope>NUCLEOTIDE SEQUENCE [LARGE SCALE GENOMIC DNA]</scope>
    <source>
        <strain>ATCC 27184 / PCC 6803 / Kazusa</strain>
    </source>
</reference>
<reference key="3">
    <citation type="journal article" date="1990" name="J. Bacteriol.">
        <title>Purification and properties of glutamine synthetases from the cyanobacteria Synechocystis sp. strain PCC 6803 and Calothrix sp. strain PCC 7601.</title>
        <authorList>
            <person name="Merida A."/>
            <person name="Leurentop L."/>
            <person name="Candau P."/>
            <person name="Florencio F.J."/>
        </authorList>
    </citation>
    <scope>FUNCTION</scope>
    <scope>CATALYTIC ACTIVITY</scope>
    <scope>BIOPHYSICOCHEMICAL PROPERTIES</scope>
    <scope>ACTIVITY REGULATION</scope>
    <scope>COFACTOR</scope>
    <scope>SUBUNIT</scope>
    <source>
        <strain>ATCC 27184 / PCC 6803 / N-1</strain>
    </source>
</reference>
<reference key="4">
    <citation type="journal article" date="1994" name="J. Bacteriol.">
        <title>A mutant lacking the glutamine synthetase gene (glnA) is impaired in the regulation of the nitrate assimilation system in the cyanobacterium Synechocystis sp. strain PCC 6803.</title>
        <authorList>
            <person name="Reyes J.C."/>
            <person name="Florencio F.J."/>
        </authorList>
    </citation>
    <scope>FUNCTION</scope>
    <scope>DISRUPTION PHENOTYPE</scope>
    <source>
        <strain>ATCC 27184 / PCC 6803 / N-1</strain>
    </source>
</reference>
<reference key="5">
    <citation type="journal article" date="1997" name="J. Bacteriol.">
        <title>Transcription of glutamine synthetase genes (glnA and glnN) from the cyanobacterium Synechocystis sp. strain PCC 6803 is differently regulated in response to nitrogen availability.</title>
        <authorList>
            <person name="Reyes J.C."/>
            <person name="Muro-Pastor M.I."/>
            <person name="Florencio F.J."/>
        </authorList>
    </citation>
    <scope>INDUCTION</scope>
    <source>
        <strain>ATCC 27184 / PCC 6803 / N-1</strain>
    </source>
</reference>
<reference key="6">
    <citation type="submission" date="2010-06" db="PDB data bank">
        <title>Crystal structure of glutamine synthetase from Synechocystis sp. PCC 6803.</title>
        <authorList>
            <person name="Saelices L."/>
            <person name="Cascio D."/>
            <person name="Florencio F.J."/>
            <person name="Muro-Pastor M.I."/>
        </authorList>
    </citation>
    <scope>X-RAY CRYSTALLOGRAPHY (2.80 ANGSTROMS) IN COMPLEX WITH ATP ANALOG AND 2 MANGANESE IONS</scope>
    <scope>COFACTOR</scope>
</reference>
<organism>
    <name type="scientific">Synechocystis sp. (strain ATCC 27184 / PCC 6803 / Kazusa)</name>
    <dbReference type="NCBI Taxonomy" id="1111708"/>
    <lineage>
        <taxon>Bacteria</taxon>
        <taxon>Bacillati</taxon>
        <taxon>Cyanobacteriota</taxon>
        <taxon>Cyanophyceae</taxon>
        <taxon>Synechococcales</taxon>
        <taxon>Merismopediaceae</taxon>
        <taxon>Synechocystis</taxon>
    </lineage>
</organism>
<proteinExistence type="evidence at protein level"/>
<protein>
    <recommendedName>
        <fullName evidence="11">Glutamine synthetase</fullName>
        <shortName evidence="11">GS</shortName>
        <ecNumber evidence="13">6.3.1.2</ecNumber>
    </recommendedName>
    <alternativeName>
        <fullName evidence="12">Glutamate--ammonia ligase</fullName>
    </alternativeName>
    <alternativeName>
        <fullName evidence="12">Glutamine synthetase I beta</fullName>
        <shortName evidence="12">GSI beta</shortName>
    </alternativeName>
</protein>
<dbReference type="EC" id="6.3.1.2" evidence="13"/>
<dbReference type="EMBL" id="X69199">
    <property type="protein sequence ID" value="CAA49139.1"/>
    <property type="molecule type" value="Genomic_DNA"/>
</dbReference>
<dbReference type="EMBL" id="BA000022">
    <property type="protein sequence ID" value="BAA17055.1"/>
    <property type="molecule type" value="Genomic_DNA"/>
</dbReference>
<dbReference type="PIR" id="S75141">
    <property type="entry name" value="S75141"/>
</dbReference>
<dbReference type="PDB" id="3NG0">
    <property type="method" value="X-ray"/>
    <property type="resolution" value="2.80 A"/>
    <property type="chains" value="A=1-473"/>
</dbReference>
<dbReference type="PDBsum" id="3NG0"/>
<dbReference type="SMR" id="P77961"/>
<dbReference type="DIP" id="DIP-48822N"/>
<dbReference type="FunCoup" id="P77961">
    <property type="interactions" value="398"/>
</dbReference>
<dbReference type="IntAct" id="P77961">
    <property type="interactions" value="5"/>
</dbReference>
<dbReference type="STRING" id="1148.gene:10497916"/>
<dbReference type="PaxDb" id="1148-1652131"/>
<dbReference type="EnsemblBacteria" id="BAA17055">
    <property type="protein sequence ID" value="BAA17055"/>
    <property type="gene ID" value="BAA17055"/>
</dbReference>
<dbReference type="KEGG" id="syn:slr1756"/>
<dbReference type="eggNOG" id="COG0174">
    <property type="taxonomic scope" value="Bacteria"/>
</dbReference>
<dbReference type="InParanoid" id="P77961"/>
<dbReference type="PhylomeDB" id="P77961"/>
<dbReference type="BRENDA" id="6.3.1.2">
    <property type="organism ID" value="382"/>
</dbReference>
<dbReference type="EvolutionaryTrace" id="P77961"/>
<dbReference type="Proteomes" id="UP000001425">
    <property type="component" value="Chromosome"/>
</dbReference>
<dbReference type="GO" id="GO:0005737">
    <property type="term" value="C:cytoplasm"/>
    <property type="evidence" value="ECO:0000318"/>
    <property type="project" value="GO_Central"/>
</dbReference>
<dbReference type="GO" id="GO:0016020">
    <property type="term" value="C:membrane"/>
    <property type="evidence" value="ECO:0000318"/>
    <property type="project" value="GO_Central"/>
</dbReference>
<dbReference type="GO" id="GO:0005524">
    <property type="term" value="F:ATP binding"/>
    <property type="evidence" value="ECO:0007669"/>
    <property type="project" value="UniProtKB-KW"/>
</dbReference>
<dbReference type="GO" id="GO:0004356">
    <property type="term" value="F:glutamine synthetase activity"/>
    <property type="evidence" value="ECO:0000318"/>
    <property type="project" value="GO_Central"/>
</dbReference>
<dbReference type="GO" id="GO:0046872">
    <property type="term" value="F:metal ion binding"/>
    <property type="evidence" value="ECO:0007669"/>
    <property type="project" value="UniProtKB-KW"/>
</dbReference>
<dbReference type="GO" id="GO:0019676">
    <property type="term" value="P:ammonia assimilation cycle"/>
    <property type="evidence" value="ECO:0000304"/>
    <property type="project" value="GO_Central"/>
</dbReference>
<dbReference type="GO" id="GO:0006542">
    <property type="term" value="P:glutamine biosynthetic process"/>
    <property type="evidence" value="ECO:0000318"/>
    <property type="project" value="GO_Central"/>
</dbReference>
<dbReference type="GO" id="GO:0019740">
    <property type="term" value="P:nitrogen utilization"/>
    <property type="evidence" value="ECO:0000318"/>
    <property type="project" value="GO_Central"/>
</dbReference>
<dbReference type="FunFam" id="3.30.590.10:FF:000001">
    <property type="entry name" value="Glutamine synthetase"/>
    <property type="match status" value="1"/>
</dbReference>
<dbReference type="Gene3D" id="3.10.20.70">
    <property type="entry name" value="Glutamine synthetase, N-terminal domain"/>
    <property type="match status" value="1"/>
</dbReference>
<dbReference type="Gene3D" id="3.30.590.10">
    <property type="entry name" value="Glutamine synthetase/guanido kinase, catalytic domain"/>
    <property type="match status" value="1"/>
</dbReference>
<dbReference type="InterPro" id="IPR008147">
    <property type="entry name" value="Gln_synt_N"/>
</dbReference>
<dbReference type="InterPro" id="IPR036651">
    <property type="entry name" value="Gln_synt_N_sf"/>
</dbReference>
<dbReference type="InterPro" id="IPR014746">
    <property type="entry name" value="Gln_synth/guanido_kin_cat_dom"/>
</dbReference>
<dbReference type="InterPro" id="IPR008146">
    <property type="entry name" value="Gln_synth_cat_dom"/>
</dbReference>
<dbReference type="InterPro" id="IPR027303">
    <property type="entry name" value="Gln_synth_gly_rich_site"/>
</dbReference>
<dbReference type="InterPro" id="IPR004809">
    <property type="entry name" value="Gln_synth_I"/>
</dbReference>
<dbReference type="InterPro" id="IPR027302">
    <property type="entry name" value="Gln_synth_N_conserv_site"/>
</dbReference>
<dbReference type="NCBIfam" id="TIGR00653">
    <property type="entry name" value="GlnA"/>
    <property type="match status" value="1"/>
</dbReference>
<dbReference type="PANTHER" id="PTHR43407">
    <property type="entry name" value="GLUTAMINE SYNTHETASE"/>
    <property type="match status" value="1"/>
</dbReference>
<dbReference type="PANTHER" id="PTHR43407:SF1">
    <property type="entry name" value="LENGSIN"/>
    <property type="match status" value="1"/>
</dbReference>
<dbReference type="Pfam" id="PF00120">
    <property type="entry name" value="Gln-synt_C"/>
    <property type="match status" value="1"/>
</dbReference>
<dbReference type="Pfam" id="PF03951">
    <property type="entry name" value="Gln-synt_N"/>
    <property type="match status" value="1"/>
</dbReference>
<dbReference type="SMART" id="SM01230">
    <property type="entry name" value="Gln-synt_C"/>
    <property type="match status" value="1"/>
</dbReference>
<dbReference type="SUPFAM" id="SSF54368">
    <property type="entry name" value="Glutamine synthetase, N-terminal domain"/>
    <property type="match status" value="1"/>
</dbReference>
<dbReference type="SUPFAM" id="SSF55931">
    <property type="entry name" value="Glutamine synthetase/guanido kinase"/>
    <property type="match status" value="1"/>
</dbReference>
<dbReference type="PROSITE" id="PS00180">
    <property type="entry name" value="GLNA_1"/>
    <property type="match status" value="1"/>
</dbReference>
<dbReference type="PROSITE" id="PS00181">
    <property type="entry name" value="GLNA_ATP"/>
    <property type="match status" value="1"/>
</dbReference>
<dbReference type="PROSITE" id="PS51986">
    <property type="entry name" value="GS_BETA_GRASP"/>
    <property type="match status" value="1"/>
</dbReference>
<dbReference type="PROSITE" id="PS51987">
    <property type="entry name" value="GS_CATALYTIC"/>
    <property type="match status" value="1"/>
</dbReference>
<accession>P77961</accession>
<accession>Q59981</accession>
<sequence length="473" mass="53026">MARTPQEVLKWIQDENIKIIDLKFIDTPGIWQHCSFYYDQLDENSFTEGIPFDGSSIRGWKAINESDMCMVPDPNTATIDPFCKEPTLSMICSIKEPRTGEWYNRDPRTIAAKAVEYLRGTGIADTVYFGPEAEFFLFDDIRFGQTENSSYYFADSVEGRWNTGREEEGGNLGYKPGYKQGYFPVAPTDTAQDIRTEMLLTMAGLCVPIEKHHHEVASGGQNELGIKFDKLVNSADNLMIYKYVIKNVAKKYGKTVTFMPKPIFNDNGSGMHVHQSLWKDGQPLFAGDKYAGFSQMGLWYIGGILKHAPALLAFTNPTTNSYKRLVPGFEAPVNLAYSQGNRSASVRIPLSGGNPKAKRLEFRCPDATSNPYLAFAAMLCAGIDGIKNQIDPGEPLDVDIYDLSPEELAKIPSTPGSLEAALEALEKDHEFLTGTGVFSPDFVESWIEYKLDNEVNPMRLRPHPYEFSLYYDC</sequence>
<keyword id="KW-0002">3D-structure</keyword>
<keyword id="KW-0067">ATP-binding</keyword>
<keyword id="KW-0963">Cytoplasm</keyword>
<keyword id="KW-0436">Ligase</keyword>
<keyword id="KW-0460">Magnesium</keyword>
<keyword id="KW-0464">Manganese</keyword>
<keyword id="KW-0479">Metal-binding</keyword>
<keyword id="KW-0547">Nucleotide-binding</keyword>
<keyword id="KW-0597">Phosphoprotein</keyword>
<keyword id="KW-1185">Reference proteome</keyword>
<comment type="function">
    <text evidence="7 8">Involved in nitrogen metabolism via ammonium assimilation (PubMed:8002575). Catalyzes the ATP-dependent biosynthesis of glutamine from glutamate and ammonia (PubMed:1973929, PubMed:8002575).</text>
</comment>
<comment type="catalytic activity">
    <reaction evidence="13">
        <text>L-glutamate + NH4(+) + ATP = L-glutamine + ADP + phosphate + H(+)</text>
        <dbReference type="Rhea" id="RHEA:16169"/>
        <dbReference type="ChEBI" id="CHEBI:15378"/>
        <dbReference type="ChEBI" id="CHEBI:28938"/>
        <dbReference type="ChEBI" id="CHEBI:29985"/>
        <dbReference type="ChEBI" id="CHEBI:30616"/>
        <dbReference type="ChEBI" id="CHEBI:43474"/>
        <dbReference type="ChEBI" id="CHEBI:58359"/>
        <dbReference type="ChEBI" id="CHEBI:456216"/>
        <dbReference type="EC" id="6.3.1.2"/>
    </reaction>
</comment>
<comment type="cofactor">
    <cofactor evidence="7 10">
        <name>Mg(2+)</name>
        <dbReference type="ChEBI" id="CHEBI:18420"/>
    </cofactor>
    <text evidence="7 10">Binds 2 Mg(2+) ions per subunit (Ref.6). Also able to bind Co(2+), Mn(2+) and Ca(2+) ion (PubMed:1973929).</text>
</comment>
<comment type="activity regulation">
    <text evidence="4 7">Inhibited by ADP (90%), AMP (80%), alanine (52%) and aspartate (41%) (PubMed:1973929). The activity of this enzyme could be controlled by adenylation under conditions of abundant glutamine (By similarity).</text>
</comment>
<comment type="biophysicochemical properties">
    <kinetics>
        <KM evidence="7">0.17 mM for ammonium</KM>
        <KM evidence="7">0.55 mM for ATP</KM>
        <KM evidence="7">1.2 mM for L-glutamate</KM>
        <KM evidence="7">14.3 mM for L-glutamine</KM>
        <KM evidence="7">14.5 mM for hydroxylamine</KM>
    </kinetics>
    <phDependence>
        <text evidence="7">Optimum pH is 7.2.</text>
    </phDependence>
    <temperatureDependence>
        <text evidence="7">Optimum temperature is 35 degrees Celsius.</text>
    </temperatureDependence>
</comment>
<comment type="subunit">
    <text evidence="7">Oligomer of 12 subunits arranged in the form of two hexagons.</text>
</comment>
<comment type="subcellular location">
    <subcellularLocation>
        <location evidence="3">Cytoplasm</location>
    </subcellularLocation>
</comment>
<comment type="induction">
    <text evidence="9">Highly expressed in nitrate- or ammonium-grown cells and exhibits two- to fourfold-higher expression in nitrogen-starved cells.</text>
</comment>
<comment type="disruption phenotype">
    <text evidence="8">Cells lacking this gene are able to grow with nitrate as the sole nitrogen source, but are unable to grow in ammonium-containing medium. This mutant is impaired in the regulation of the nitrate assimilation system.</text>
</comment>
<comment type="similarity">
    <text evidence="12">Belongs to the glutamine synthetase family.</text>
</comment>
<evidence type="ECO:0000250" key="1">
    <source>
        <dbReference type="UniProtKB" id="P0A1P6"/>
    </source>
</evidence>
<evidence type="ECO:0000250" key="2">
    <source>
        <dbReference type="UniProtKB" id="P12425"/>
    </source>
</evidence>
<evidence type="ECO:0000250" key="3">
    <source>
        <dbReference type="UniProtKB" id="P9WN39"/>
    </source>
</evidence>
<evidence type="ECO:0000250" key="4">
    <source>
        <dbReference type="UniProtKB" id="Q3V5W6"/>
    </source>
</evidence>
<evidence type="ECO:0000255" key="5">
    <source>
        <dbReference type="PROSITE-ProRule" id="PRU01330"/>
    </source>
</evidence>
<evidence type="ECO:0000255" key="6">
    <source>
        <dbReference type="PROSITE-ProRule" id="PRU01331"/>
    </source>
</evidence>
<evidence type="ECO:0000269" key="7">
    <source>
    </source>
</evidence>
<evidence type="ECO:0000269" key="8">
    <source>
    </source>
</evidence>
<evidence type="ECO:0000269" key="9">
    <source>
    </source>
</evidence>
<evidence type="ECO:0000269" key="10">
    <source ref="6"/>
</evidence>
<evidence type="ECO:0000303" key="11">
    <source>
    </source>
</evidence>
<evidence type="ECO:0000305" key="12"/>
<evidence type="ECO:0000305" key="13">
    <source>
    </source>
</evidence>
<evidence type="ECO:0000305" key="14">
    <source ref="6"/>
</evidence>
<evidence type="ECO:0007744" key="15">
    <source>
        <dbReference type="PDB" id="3NG0"/>
    </source>
</evidence>
<evidence type="ECO:0007829" key="16">
    <source>
        <dbReference type="PDB" id="3NG0"/>
    </source>
</evidence>
<name>GLN1B_SYNY3</name>
<gene>
    <name evidence="11" type="primary">glnA</name>
    <name type="ordered locus">slr1756</name>
</gene>
<feature type="chain" id="PRO_0000153272" description="Glutamine synthetase">
    <location>
        <begin position="1"/>
        <end position="473"/>
    </location>
</feature>
<feature type="domain" description="GS beta-grasp" evidence="5">
    <location>
        <begin position="15"/>
        <end position="100"/>
    </location>
</feature>
<feature type="domain" description="GS catalytic" evidence="6">
    <location>
        <begin position="107"/>
        <end position="473"/>
    </location>
</feature>
<feature type="binding site" evidence="14 15">
    <location>
        <position position="132"/>
    </location>
    <ligand>
        <name>Mn(2+)</name>
        <dbReference type="ChEBI" id="CHEBI:29035"/>
        <label>1</label>
    </ligand>
</feature>
<feature type="binding site" evidence="10 15">
    <location>
        <position position="134"/>
    </location>
    <ligand>
        <name>Mg(2+)</name>
        <dbReference type="ChEBI" id="CHEBI:18420"/>
        <label>2</label>
    </ligand>
</feature>
<feature type="binding site" evidence="14 15">
    <location>
        <position position="210"/>
    </location>
    <ligand>
        <name>ATP</name>
        <dbReference type="ChEBI" id="CHEBI:30616"/>
    </ligand>
</feature>
<feature type="binding site" evidence="10 15">
    <location>
        <position position="215"/>
    </location>
    <ligand>
        <name>Mg(2+)</name>
        <dbReference type="ChEBI" id="CHEBI:18420"/>
        <label>2</label>
    </ligand>
</feature>
<feature type="binding site" evidence="10 15">
    <location>
        <position position="223"/>
    </location>
    <ligand>
        <name>Mg(2+)</name>
        <dbReference type="ChEBI" id="CHEBI:18420"/>
        <label>2</label>
    </ligand>
</feature>
<feature type="binding site" evidence="3">
    <location>
        <begin position="267"/>
        <end position="268"/>
    </location>
    <ligand>
        <name>L-glutamate</name>
        <dbReference type="ChEBI" id="CHEBI:29985"/>
    </ligand>
</feature>
<feature type="binding site" evidence="2">
    <location>
        <position position="268"/>
    </location>
    <ligand>
        <name>L-glutamate</name>
        <dbReference type="ChEBI" id="CHEBI:29985"/>
    </ligand>
</feature>
<feature type="binding site" evidence="3">
    <location>
        <position position="272"/>
    </location>
    <ligand>
        <name>Mg(2+)</name>
        <dbReference type="ChEBI" id="CHEBI:18420"/>
        <label>1</label>
    </ligand>
</feature>
<feature type="binding site" evidence="3">
    <location>
        <begin position="274"/>
        <end position="276"/>
    </location>
    <ligand>
        <name>ATP</name>
        <dbReference type="ChEBI" id="CHEBI:30616"/>
    </ligand>
</feature>
<feature type="binding site" evidence="14 15">
    <location>
        <position position="276"/>
    </location>
    <ligand>
        <name>ATP</name>
        <dbReference type="ChEBI" id="CHEBI:30616"/>
    </ligand>
</feature>
<feature type="binding site" evidence="1">
    <location>
        <position position="324"/>
    </location>
    <ligand>
        <name>L-glutamate</name>
        <dbReference type="ChEBI" id="CHEBI:29985"/>
    </ligand>
</feature>
<feature type="binding site" evidence="1">
    <location>
        <position position="330"/>
    </location>
    <ligand>
        <name>L-glutamate</name>
        <dbReference type="ChEBI" id="CHEBI:29985"/>
    </ligand>
</feature>
<feature type="binding site" evidence="14 15">
    <location>
        <position position="342"/>
    </location>
    <ligand>
        <name>ATP</name>
        <dbReference type="ChEBI" id="CHEBI:30616"/>
    </ligand>
</feature>
<feature type="binding site" evidence="3">
    <location>
        <position position="342"/>
    </location>
    <ligand>
        <name>L-glutamate</name>
        <dbReference type="ChEBI" id="CHEBI:29985"/>
    </ligand>
</feature>
<feature type="binding site" evidence="14 15">
    <location>
        <position position="347"/>
    </location>
    <ligand>
        <name>ATP</name>
        <dbReference type="ChEBI" id="CHEBI:30616"/>
    </ligand>
</feature>
<feature type="binding site" evidence="14 15">
    <location>
        <position position="356"/>
    </location>
    <ligand>
        <name>ATP</name>
        <dbReference type="ChEBI" id="CHEBI:30616"/>
    </ligand>
</feature>
<feature type="binding site" evidence="10 15">
    <location>
        <position position="361"/>
    </location>
    <ligand>
        <name>Mn(2+)</name>
        <dbReference type="ChEBI" id="CHEBI:29035"/>
        <label>1</label>
    </ligand>
</feature>
<feature type="binding site" evidence="1">
    <location>
        <position position="363"/>
    </location>
    <ligand>
        <name>L-glutamate</name>
        <dbReference type="ChEBI" id="CHEBI:29985"/>
    </ligand>
</feature>
<feature type="modified residue" description="O-AMP-tyrosine" evidence="3">
    <location>
        <position position="401"/>
    </location>
</feature>
<feature type="sequence conflict" description="In Ref. 2; BAA17055." evidence="12" ref="2">
    <original>V</original>
    <variation>A</variation>
    <location>
        <position position="115"/>
    </location>
</feature>
<feature type="sequence conflict" description="In Ref. 1; CAA49139." evidence="12" ref="1">
    <original>QTE</original>
    <variation>PNG</variation>
    <location>
        <begin position="145"/>
        <end position="147"/>
    </location>
</feature>
<feature type="sequence conflict" description="In Ref. 1; CAA49139." evidence="12" ref="1">
    <original>Q</original>
    <variation>E</variation>
    <location>
        <position position="180"/>
    </location>
</feature>
<feature type="sequence conflict" description="In Ref. 2; BAA17055." evidence="12" ref="2">
    <original>GLC</original>
    <variation>AFG</variation>
    <location>
        <begin position="204"/>
        <end position="206"/>
    </location>
</feature>
<feature type="sequence conflict" description="In Ref. 1; CAA49139." evidence="12" ref="1">
    <original>K</original>
    <variation>KFDK</variation>
    <location>
        <position position="230"/>
    </location>
</feature>
<feature type="sequence conflict" description="In Ref. 1; CAA49139." evidence="12" ref="1">
    <original>M</original>
    <variation>I</variation>
    <location>
        <position position="239"/>
    </location>
</feature>
<feature type="sequence conflict" description="In Ref. 1; CAA49139." evidence="12" ref="1">
    <original>K</original>
    <variation>N</variation>
    <location>
        <position position="358"/>
    </location>
</feature>
<feature type="sequence conflict" description="In Ref. 1; CAA49139." evidence="12" ref="1">
    <original>ML</original>
    <variation>IV</variation>
    <location>
        <begin position="378"/>
        <end position="379"/>
    </location>
</feature>
<feature type="sequence conflict" description="In Ref. 1; CAA49139." evidence="12" ref="1">
    <original>E</original>
    <variation>Q</variation>
    <location>
        <position position="430"/>
    </location>
</feature>
<feature type="helix" evidence="16">
    <location>
        <begin position="5"/>
        <end position="14"/>
    </location>
</feature>
<feature type="strand" evidence="16">
    <location>
        <begin position="19"/>
        <end position="25"/>
    </location>
</feature>
<feature type="strand" evidence="16">
    <location>
        <begin position="27"/>
        <end position="29"/>
    </location>
</feature>
<feature type="strand" evidence="16">
    <location>
        <begin position="31"/>
        <end position="37"/>
    </location>
</feature>
<feature type="helix" evidence="16">
    <location>
        <begin position="38"/>
        <end position="40"/>
    </location>
</feature>
<feature type="helix" evidence="16">
    <location>
        <begin position="43"/>
        <end position="46"/>
    </location>
</feature>
<feature type="strand" evidence="16">
    <location>
        <begin position="50"/>
        <end position="53"/>
    </location>
</feature>
<feature type="helix" evidence="16">
    <location>
        <begin position="63"/>
        <end position="65"/>
    </location>
</feature>
<feature type="strand" evidence="16">
    <location>
        <begin position="67"/>
        <end position="72"/>
    </location>
</feature>
<feature type="helix" evidence="16">
    <location>
        <begin position="74"/>
        <end position="76"/>
    </location>
</feature>
<feature type="strand" evidence="16">
    <location>
        <begin position="87"/>
        <end position="95"/>
    </location>
</feature>
<feature type="turn" evidence="16">
    <location>
        <begin position="97"/>
        <end position="99"/>
    </location>
</feature>
<feature type="strand" evidence="16">
    <location>
        <begin position="100"/>
        <end position="102"/>
    </location>
</feature>
<feature type="helix" evidence="16">
    <location>
        <begin position="107"/>
        <end position="120"/>
    </location>
</feature>
<feature type="strand" evidence="16">
    <location>
        <begin position="121"/>
        <end position="123"/>
    </location>
</feature>
<feature type="strand" evidence="16">
    <location>
        <begin position="125"/>
        <end position="133"/>
    </location>
</feature>
<feature type="strand" evidence="16">
    <location>
        <begin position="135"/>
        <end position="145"/>
    </location>
</feature>
<feature type="strand" evidence="16">
    <location>
        <begin position="150"/>
        <end position="155"/>
    </location>
</feature>
<feature type="helix" evidence="16">
    <location>
        <begin position="160"/>
        <end position="162"/>
    </location>
</feature>
<feature type="turn" evidence="16">
    <location>
        <begin position="186"/>
        <end position="188"/>
    </location>
</feature>
<feature type="helix" evidence="16">
    <location>
        <begin position="192"/>
        <end position="204"/>
    </location>
</feature>
<feature type="strand" evidence="16">
    <location>
        <begin position="209"/>
        <end position="214"/>
    </location>
</feature>
<feature type="turn" evidence="16">
    <location>
        <begin position="218"/>
        <end position="220"/>
    </location>
</feature>
<feature type="strand" evidence="16">
    <location>
        <begin position="221"/>
        <end position="226"/>
    </location>
</feature>
<feature type="helix" evidence="16">
    <location>
        <begin position="231"/>
        <end position="251"/>
    </location>
</feature>
<feature type="strand" evidence="16">
    <location>
        <begin position="255"/>
        <end position="257"/>
    </location>
</feature>
<feature type="strand" evidence="16">
    <location>
        <begin position="271"/>
        <end position="279"/>
    </location>
</feature>
<feature type="strand" evidence="16">
    <location>
        <begin position="286"/>
        <end position="289"/>
    </location>
</feature>
<feature type="helix" evidence="16">
    <location>
        <begin position="290"/>
        <end position="292"/>
    </location>
</feature>
<feature type="helix" evidence="16">
    <location>
        <begin position="295"/>
        <end position="315"/>
    </location>
</feature>
<feature type="helix" evidence="16">
    <location>
        <begin position="321"/>
        <end position="324"/>
    </location>
</feature>
<feature type="turn" evidence="16">
    <location>
        <begin position="327"/>
        <end position="329"/>
    </location>
</feature>
<feature type="strand" evidence="16">
    <location>
        <begin position="337"/>
        <end position="340"/>
    </location>
</feature>
<feature type="strand" evidence="16">
    <location>
        <begin position="344"/>
        <end position="348"/>
    </location>
</feature>
<feature type="helix" evidence="16">
    <location>
        <begin position="355"/>
        <end position="357"/>
    </location>
</feature>
<feature type="strand" evidence="16">
    <location>
        <begin position="360"/>
        <end position="362"/>
    </location>
</feature>
<feature type="helix" evidence="16">
    <location>
        <begin position="371"/>
        <end position="388"/>
    </location>
</feature>
<feature type="helix" evidence="16">
    <location>
        <begin position="418"/>
        <end position="427"/>
    </location>
</feature>
<feature type="helix" evidence="16">
    <location>
        <begin position="430"/>
        <end position="433"/>
    </location>
</feature>
<feature type="strand" evidence="16">
    <location>
        <begin position="436"/>
        <end position="438"/>
    </location>
</feature>
<feature type="helix" evidence="16">
    <location>
        <begin position="440"/>
        <end position="453"/>
    </location>
</feature>
<feature type="helix" evidence="16">
    <location>
        <begin position="455"/>
        <end position="460"/>
    </location>
</feature>
<feature type="helix" evidence="16">
    <location>
        <begin position="465"/>
        <end position="470"/>
    </location>
</feature>